<name>PSBT_PEA</name>
<geneLocation type="chloroplast"/>
<evidence type="ECO:0000255" key="1">
    <source>
        <dbReference type="HAMAP-Rule" id="MF_00808"/>
    </source>
</evidence>
<evidence type="ECO:0007829" key="2">
    <source>
        <dbReference type="PDB" id="5XNL"/>
    </source>
</evidence>
<protein>
    <recommendedName>
        <fullName evidence="1">Photosystem II reaction center protein T</fullName>
        <shortName evidence="1">PSII-T</shortName>
    </recommendedName>
</protein>
<reference key="1">
    <citation type="submission" date="2000-02" db="EMBL/GenBank/DDBJ databases">
        <title>Long branches in the seed plants and the root of the angiosperms.</title>
        <authorList>
            <person name="Graham S.W."/>
            <person name="Reeves P.A."/>
            <person name="Burns A."/>
            <person name="Olmstead R.G."/>
        </authorList>
    </citation>
    <scope>NUCLEOTIDE SEQUENCE [GENOMIC DNA]</scope>
</reference>
<comment type="function">
    <text evidence="1">Found at the monomer-monomer interface of the photosystem II (PS II) dimer, plays a role in assembly and dimerization of PSII. PSII is a light-driven water plastoquinone oxidoreductase, using light energy to abstract electrons from H(2)O, generating a proton gradient subsequently used for ATP formation.</text>
</comment>
<comment type="subunit">
    <text evidence="1">PSII is composed of 1 copy each of membrane proteins PsbA, PsbB, PsbC, PsbD, PsbE, PsbF, PsbH, PsbI, PsbJ, PsbK, PsbL, PsbM, PsbT, PsbY, PsbZ, Psb30/Ycf12, at least 3 peripheral proteins of the oxygen-evolving complex and a large number of cofactors. It forms dimeric complexes.</text>
</comment>
<comment type="subcellular location">
    <subcellularLocation>
        <location evidence="1">Plastid</location>
        <location evidence="1">Chloroplast thylakoid membrane</location>
        <topology evidence="1">Single-pass membrane protein</topology>
    </subcellularLocation>
</comment>
<comment type="similarity">
    <text evidence="1">Belongs to the PsbT family.</text>
</comment>
<organism>
    <name type="scientific">Pisum sativum</name>
    <name type="common">Garden pea</name>
    <name type="synonym">Lathyrus oleraceus</name>
    <dbReference type="NCBI Taxonomy" id="3888"/>
    <lineage>
        <taxon>Eukaryota</taxon>
        <taxon>Viridiplantae</taxon>
        <taxon>Streptophyta</taxon>
        <taxon>Embryophyta</taxon>
        <taxon>Tracheophyta</taxon>
        <taxon>Spermatophyta</taxon>
        <taxon>Magnoliopsida</taxon>
        <taxon>eudicotyledons</taxon>
        <taxon>Gunneridae</taxon>
        <taxon>Pentapetalae</taxon>
        <taxon>rosids</taxon>
        <taxon>fabids</taxon>
        <taxon>Fabales</taxon>
        <taxon>Fabaceae</taxon>
        <taxon>Papilionoideae</taxon>
        <taxon>50 kb inversion clade</taxon>
        <taxon>NPAAA clade</taxon>
        <taxon>Hologalegina</taxon>
        <taxon>IRL clade</taxon>
        <taxon>Fabeae</taxon>
        <taxon>Pisum</taxon>
    </lineage>
</organism>
<sequence>MEALVYTFLLVSTLGIIFFAIFFREPPKVPTKNTK</sequence>
<dbReference type="EMBL" id="AY007467">
    <property type="protein sequence ID" value="AAG12380.1"/>
    <property type="molecule type" value="Genomic_DNA"/>
</dbReference>
<dbReference type="RefSeq" id="YP_003587578.1">
    <property type="nucleotide sequence ID" value="NC_014057.1"/>
</dbReference>
<dbReference type="PDB" id="5XNL">
    <property type="method" value="EM"/>
    <property type="resolution" value="2.70 A"/>
    <property type="chains" value="T/t=1-35"/>
</dbReference>
<dbReference type="PDB" id="5XNM">
    <property type="method" value="EM"/>
    <property type="resolution" value="3.20 A"/>
    <property type="chains" value="T/t=1-35"/>
</dbReference>
<dbReference type="PDB" id="6YP7">
    <property type="method" value="EM"/>
    <property type="resolution" value="3.80 A"/>
    <property type="chains" value="T/t=1-32"/>
</dbReference>
<dbReference type="PDBsum" id="5XNL"/>
<dbReference type="PDBsum" id="5XNM"/>
<dbReference type="PDBsum" id="6YP7"/>
<dbReference type="EMDB" id="EMD-10865"/>
<dbReference type="EMDB" id="EMD-6741"/>
<dbReference type="EMDB" id="EMD-6742"/>
<dbReference type="SMR" id="Q8HS25"/>
<dbReference type="GeneID" id="9073133"/>
<dbReference type="GO" id="GO:0009535">
    <property type="term" value="C:chloroplast thylakoid membrane"/>
    <property type="evidence" value="ECO:0007669"/>
    <property type="project" value="UniProtKB-SubCell"/>
</dbReference>
<dbReference type="GO" id="GO:0009539">
    <property type="term" value="C:photosystem II reaction center"/>
    <property type="evidence" value="ECO:0007669"/>
    <property type="project" value="InterPro"/>
</dbReference>
<dbReference type="GO" id="GO:0015979">
    <property type="term" value="P:photosynthesis"/>
    <property type="evidence" value="ECO:0007669"/>
    <property type="project" value="UniProtKB-UniRule"/>
</dbReference>
<dbReference type="HAMAP" id="MF_00808">
    <property type="entry name" value="PSII_PsbT"/>
    <property type="match status" value="1"/>
</dbReference>
<dbReference type="InterPro" id="IPR001743">
    <property type="entry name" value="PSII_PsbT"/>
</dbReference>
<dbReference type="InterPro" id="IPR037268">
    <property type="entry name" value="PSII_PsbT_sf"/>
</dbReference>
<dbReference type="PANTHER" id="PTHR36411">
    <property type="match status" value="1"/>
</dbReference>
<dbReference type="PANTHER" id="PTHR36411:SF2">
    <property type="entry name" value="PHOTOSYSTEM II REACTION CENTER PROTEIN T"/>
    <property type="match status" value="1"/>
</dbReference>
<dbReference type="Pfam" id="PF01405">
    <property type="entry name" value="PsbT"/>
    <property type="match status" value="1"/>
</dbReference>
<dbReference type="SUPFAM" id="SSF161029">
    <property type="entry name" value="Photosystem II reaction center protein T, PsbT"/>
    <property type="match status" value="1"/>
</dbReference>
<proteinExistence type="evidence at protein level"/>
<keyword id="KW-0002">3D-structure</keyword>
<keyword id="KW-0150">Chloroplast</keyword>
<keyword id="KW-0472">Membrane</keyword>
<keyword id="KW-0602">Photosynthesis</keyword>
<keyword id="KW-0604">Photosystem II</keyword>
<keyword id="KW-0934">Plastid</keyword>
<keyword id="KW-0793">Thylakoid</keyword>
<keyword id="KW-0812">Transmembrane</keyword>
<keyword id="KW-1133">Transmembrane helix</keyword>
<gene>
    <name evidence="1" type="primary">psbT</name>
</gene>
<feature type="chain" id="PRO_0000217965" description="Photosystem II reaction center protein T">
    <location>
        <begin position="1"/>
        <end position="35"/>
    </location>
</feature>
<feature type="transmembrane region" description="Helical" evidence="1">
    <location>
        <begin position="3"/>
        <end position="23"/>
    </location>
</feature>
<feature type="helix" evidence="2">
    <location>
        <begin position="2"/>
        <end position="22"/>
    </location>
</feature>
<accession>Q8HS25</accession>